<comment type="function">
    <text evidence="1">Catalyzes the oxidation of 5,10-methylenetetrahydrofolate to 5,10-methenyltetrahydrofolate and then the hydrolysis of 5,10-methenyltetrahydrofolate to 10-formyltetrahydrofolate.</text>
</comment>
<comment type="catalytic activity">
    <reaction evidence="1">
        <text>(6R)-5,10-methylene-5,6,7,8-tetrahydrofolate + NADP(+) = (6R)-5,10-methenyltetrahydrofolate + NADPH</text>
        <dbReference type="Rhea" id="RHEA:22812"/>
        <dbReference type="ChEBI" id="CHEBI:15636"/>
        <dbReference type="ChEBI" id="CHEBI:57455"/>
        <dbReference type="ChEBI" id="CHEBI:57783"/>
        <dbReference type="ChEBI" id="CHEBI:58349"/>
        <dbReference type="EC" id="1.5.1.5"/>
    </reaction>
</comment>
<comment type="catalytic activity">
    <reaction evidence="1">
        <text>(6R)-5,10-methenyltetrahydrofolate + H2O = (6R)-10-formyltetrahydrofolate + H(+)</text>
        <dbReference type="Rhea" id="RHEA:23700"/>
        <dbReference type="ChEBI" id="CHEBI:15377"/>
        <dbReference type="ChEBI" id="CHEBI:15378"/>
        <dbReference type="ChEBI" id="CHEBI:57455"/>
        <dbReference type="ChEBI" id="CHEBI:195366"/>
        <dbReference type="EC" id="3.5.4.9"/>
    </reaction>
</comment>
<comment type="pathway">
    <text evidence="1">One-carbon metabolism; tetrahydrofolate interconversion.</text>
</comment>
<comment type="subunit">
    <text evidence="1">Homodimer.</text>
</comment>
<comment type="similarity">
    <text evidence="1">Belongs to the tetrahydrofolate dehydrogenase/cyclohydrolase family.</text>
</comment>
<sequence length="285" mass="29873">MTATLIDGNALSKTLRAQAAERAAALAARGHRPGLAVILVGDNPASEVYVRNKIKACEDNGFFSLKDRYPATLSEPELLARIDELNRDPKIHGILVQLPLPAHIDSHKVIEAIAPEKDVDGFHVANAGALLTGKPLFRPCTPYGVMKMFEAYKIPLQGANAVVIGRSNIVGKPMALLLLEAGATVTICHSKTCELAAHTRAADIVVAAVGKRNVLTADMVKPGATVIDVGMNRNDEGKLCGDVDFAGVSQVAGHITPVPGGVGPMTITMLLVNTIEAAERAAAAA</sequence>
<proteinExistence type="inferred from homology"/>
<accession>A1V5P2</accession>
<name>FOLD_BURMS</name>
<feature type="chain" id="PRO_1000069231" description="Bifunctional protein FolD">
    <location>
        <begin position="1"/>
        <end position="285"/>
    </location>
</feature>
<feature type="binding site" evidence="1">
    <location>
        <begin position="165"/>
        <end position="167"/>
    </location>
    <ligand>
        <name>NADP(+)</name>
        <dbReference type="ChEBI" id="CHEBI:58349"/>
    </ligand>
</feature>
<feature type="binding site" evidence="1">
    <location>
        <position position="190"/>
    </location>
    <ligand>
        <name>NADP(+)</name>
        <dbReference type="ChEBI" id="CHEBI:58349"/>
    </ligand>
</feature>
<dbReference type="EC" id="1.5.1.5" evidence="1"/>
<dbReference type="EC" id="3.5.4.9" evidence="1"/>
<dbReference type="EMBL" id="CP000526">
    <property type="protein sequence ID" value="ABM50808.1"/>
    <property type="molecule type" value="Genomic_DNA"/>
</dbReference>
<dbReference type="RefSeq" id="WP_004192825.1">
    <property type="nucleotide sequence ID" value="NC_008785.1"/>
</dbReference>
<dbReference type="SMR" id="A1V5P2"/>
<dbReference type="GeneID" id="92979446"/>
<dbReference type="KEGG" id="bmv:BMASAVP1_A2234"/>
<dbReference type="HOGENOM" id="CLU_034045_2_1_4"/>
<dbReference type="UniPathway" id="UPA00193"/>
<dbReference type="GO" id="GO:0005829">
    <property type="term" value="C:cytosol"/>
    <property type="evidence" value="ECO:0007669"/>
    <property type="project" value="TreeGrafter"/>
</dbReference>
<dbReference type="GO" id="GO:0004477">
    <property type="term" value="F:methenyltetrahydrofolate cyclohydrolase activity"/>
    <property type="evidence" value="ECO:0007669"/>
    <property type="project" value="UniProtKB-UniRule"/>
</dbReference>
<dbReference type="GO" id="GO:0004488">
    <property type="term" value="F:methylenetetrahydrofolate dehydrogenase (NADP+) activity"/>
    <property type="evidence" value="ECO:0007669"/>
    <property type="project" value="UniProtKB-UniRule"/>
</dbReference>
<dbReference type="GO" id="GO:0000105">
    <property type="term" value="P:L-histidine biosynthetic process"/>
    <property type="evidence" value="ECO:0007669"/>
    <property type="project" value="UniProtKB-KW"/>
</dbReference>
<dbReference type="GO" id="GO:0009086">
    <property type="term" value="P:methionine biosynthetic process"/>
    <property type="evidence" value="ECO:0007669"/>
    <property type="project" value="UniProtKB-KW"/>
</dbReference>
<dbReference type="GO" id="GO:0006164">
    <property type="term" value="P:purine nucleotide biosynthetic process"/>
    <property type="evidence" value="ECO:0007669"/>
    <property type="project" value="UniProtKB-KW"/>
</dbReference>
<dbReference type="GO" id="GO:0035999">
    <property type="term" value="P:tetrahydrofolate interconversion"/>
    <property type="evidence" value="ECO:0007669"/>
    <property type="project" value="UniProtKB-UniRule"/>
</dbReference>
<dbReference type="CDD" id="cd01080">
    <property type="entry name" value="NAD_bind_m-THF_DH_Cyclohyd"/>
    <property type="match status" value="1"/>
</dbReference>
<dbReference type="FunFam" id="3.40.50.720:FF:000094">
    <property type="entry name" value="Bifunctional protein FolD"/>
    <property type="match status" value="1"/>
</dbReference>
<dbReference type="FunFam" id="3.40.50.10860:FF:000005">
    <property type="entry name" value="C-1-tetrahydrofolate synthase, cytoplasmic, putative"/>
    <property type="match status" value="1"/>
</dbReference>
<dbReference type="Gene3D" id="3.40.50.10860">
    <property type="entry name" value="Leucine Dehydrogenase, chain A, domain 1"/>
    <property type="match status" value="1"/>
</dbReference>
<dbReference type="Gene3D" id="3.40.50.720">
    <property type="entry name" value="NAD(P)-binding Rossmann-like Domain"/>
    <property type="match status" value="1"/>
</dbReference>
<dbReference type="HAMAP" id="MF_01576">
    <property type="entry name" value="THF_DHG_CYH"/>
    <property type="match status" value="1"/>
</dbReference>
<dbReference type="InterPro" id="IPR046346">
    <property type="entry name" value="Aminoacid_DH-like_N_sf"/>
</dbReference>
<dbReference type="InterPro" id="IPR036291">
    <property type="entry name" value="NAD(P)-bd_dom_sf"/>
</dbReference>
<dbReference type="InterPro" id="IPR000672">
    <property type="entry name" value="THF_DH/CycHdrlase"/>
</dbReference>
<dbReference type="InterPro" id="IPR020630">
    <property type="entry name" value="THF_DH/CycHdrlase_cat_dom"/>
</dbReference>
<dbReference type="InterPro" id="IPR020867">
    <property type="entry name" value="THF_DH/CycHdrlase_CS"/>
</dbReference>
<dbReference type="InterPro" id="IPR020631">
    <property type="entry name" value="THF_DH/CycHdrlase_NAD-bd_dom"/>
</dbReference>
<dbReference type="NCBIfam" id="NF008058">
    <property type="entry name" value="PRK10792.1"/>
    <property type="match status" value="1"/>
</dbReference>
<dbReference type="NCBIfam" id="NF010783">
    <property type="entry name" value="PRK14186.1"/>
    <property type="match status" value="1"/>
</dbReference>
<dbReference type="NCBIfam" id="NF010786">
    <property type="entry name" value="PRK14189.1"/>
    <property type="match status" value="1"/>
</dbReference>
<dbReference type="PANTHER" id="PTHR48099:SF5">
    <property type="entry name" value="C-1-TETRAHYDROFOLATE SYNTHASE, CYTOPLASMIC"/>
    <property type="match status" value="1"/>
</dbReference>
<dbReference type="PANTHER" id="PTHR48099">
    <property type="entry name" value="C-1-TETRAHYDROFOLATE SYNTHASE, CYTOPLASMIC-RELATED"/>
    <property type="match status" value="1"/>
</dbReference>
<dbReference type="Pfam" id="PF00763">
    <property type="entry name" value="THF_DHG_CYH"/>
    <property type="match status" value="1"/>
</dbReference>
<dbReference type="Pfam" id="PF02882">
    <property type="entry name" value="THF_DHG_CYH_C"/>
    <property type="match status" value="1"/>
</dbReference>
<dbReference type="PRINTS" id="PR00085">
    <property type="entry name" value="THFDHDRGNASE"/>
</dbReference>
<dbReference type="SUPFAM" id="SSF53223">
    <property type="entry name" value="Aminoacid dehydrogenase-like, N-terminal domain"/>
    <property type="match status" value="1"/>
</dbReference>
<dbReference type="SUPFAM" id="SSF51735">
    <property type="entry name" value="NAD(P)-binding Rossmann-fold domains"/>
    <property type="match status" value="1"/>
</dbReference>
<dbReference type="PROSITE" id="PS00766">
    <property type="entry name" value="THF_DHG_CYH_1"/>
    <property type="match status" value="1"/>
</dbReference>
<dbReference type="PROSITE" id="PS00767">
    <property type="entry name" value="THF_DHG_CYH_2"/>
    <property type="match status" value="1"/>
</dbReference>
<keyword id="KW-0028">Amino-acid biosynthesis</keyword>
<keyword id="KW-0368">Histidine biosynthesis</keyword>
<keyword id="KW-0378">Hydrolase</keyword>
<keyword id="KW-0486">Methionine biosynthesis</keyword>
<keyword id="KW-0511">Multifunctional enzyme</keyword>
<keyword id="KW-0521">NADP</keyword>
<keyword id="KW-0554">One-carbon metabolism</keyword>
<keyword id="KW-0560">Oxidoreductase</keyword>
<keyword id="KW-0658">Purine biosynthesis</keyword>
<protein>
    <recommendedName>
        <fullName evidence="1">Bifunctional protein FolD</fullName>
    </recommendedName>
    <domain>
        <recommendedName>
            <fullName evidence="1">Methylenetetrahydrofolate dehydrogenase</fullName>
            <ecNumber evidence="1">1.5.1.5</ecNumber>
        </recommendedName>
    </domain>
    <domain>
        <recommendedName>
            <fullName evidence="1">Methenyltetrahydrofolate cyclohydrolase</fullName>
            <ecNumber evidence="1">3.5.4.9</ecNumber>
        </recommendedName>
    </domain>
</protein>
<organism>
    <name type="scientific">Burkholderia mallei (strain SAVP1)</name>
    <dbReference type="NCBI Taxonomy" id="320388"/>
    <lineage>
        <taxon>Bacteria</taxon>
        <taxon>Pseudomonadati</taxon>
        <taxon>Pseudomonadota</taxon>
        <taxon>Betaproteobacteria</taxon>
        <taxon>Burkholderiales</taxon>
        <taxon>Burkholderiaceae</taxon>
        <taxon>Burkholderia</taxon>
        <taxon>pseudomallei group</taxon>
    </lineage>
</organism>
<evidence type="ECO:0000255" key="1">
    <source>
        <dbReference type="HAMAP-Rule" id="MF_01576"/>
    </source>
</evidence>
<reference key="1">
    <citation type="journal article" date="2010" name="Genome Biol. Evol.">
        <title>Continuing evolution of Burkholderia mallei through genome reduction and large-scale rearrangements.</title>
        <authorList>
            <person name="Losada L."/>
            <person name="Ronning C.M."/>
            <person name="DeShazer D."/>
            <person name="Woods D."/>
            <person name="Fedorova N."/>
            <person name="Kim H.S."/>
            <person name="Shabalina S.A."/>
            <person name="Pearson T.R."/>
            <person name="Brinkac L."/>
            <person name="Tan P."/>
            <person name="Nandi T."/>
            <person name="Crabtree J."/>
            <person name="Badger J."/>
            <person name="Beckstrom-Sternberg S."/>
            <person name="Saqib M."/>
            <person name="Schutzer S.E."/>
            <person name="Keim P."/>
            <person name="Nierman W.C."/>
        </authorList>
    </citation>
    <scope>NUCLEOTIDE SEQUENCE [LARGE SCALE GENOMIC DNA]</scope>
    <source>
        <strain>SAVP1</strain>
    </source>
</reference>
<gene>
    <name evidence="1" type="primary">folD</name>
    <name type="ordered locus">BMASAVP1_A2234</name>
</gene>